<keyword id="KW-0414">Isoprene biosynthesis</keyword>
<keyword id="KW-0464">Manganese</keyword>
<keyword id="KW-0479">Metal-binding</keyword>
<keyword id="KW-0521">NADP</keyword>
<keyword id="KW-0560">Oxidoreductase</keyword>
<keyword id="KW-1185">Reference proteome</keyword>
<evidence type="ECO:0000255" key="1">
    <source>
        <dbReference type="HAMAP-Rule" id="MF_00183"/>
    </source>
</evidence>
<sequence>MGRRGVTKKRNRIDRVKTRVVVLGSTGSIGTQALEVMADNPERFELVGISAHGSKPDVLAQQVRDFGLDLGRVAVASEHTAEWLDGEFGAHCIRGKDSARELVEAVGPELGECDVILNALVGSLGLDATLATLGTKAKLALANKESLVAGGQLVLKAADEGQLIPVDSEHSAMAQCLRSGRVDEVDSLVLTASGGPFRGYTRAQLEDVTPLQAANHPTWSMGQMNTLNSATMVNKGLELIEASLLFGIPAEKIDVTVHPQSIVHSMVTFIDGATIAQASPPSMKLPISLALGWPDRIADAQPKLDFTEATDWHFEPLDDEVFPAVILARQAVTAGGTMPAVYNAANEEAAVEFLNGRLSFPRIVDTVAATMEACQHLSAEPNDLEDVLAAEREARAKAHERMATWLSD</sequence>
<accession>Q4JV26</accession>
<protein>
    <recommendedName>
        <fullName evidence="1">1-deoxy-D-xylulose 5-phosphate reductoisomerase</fullName>
        <shortName evidence="1">DXP reductoisomerase</shortName>
        <ecNumber evidence="1">1.1.1.267</ecNumber>
    </recommendedName>
    <alternativeName>
        <fullName evidence="1">1-deoxyxylulose-5-phosphate reductoisomerase</fullName>
    </alternativeName>
    <alternativeName>
        <fullName evidence="1">2-C-methyl-D-erythritol 4-phosphate synthase</fullName>
    </alternativeName>
</protein>
<name>DXR_CORJK</name>
<comment type="function">
    <text evidence="1">Catalyzes the NADPH-dependent rearrangement and reduction of 1-deoxy-D-xylulose-5-phosphate (DXP) to 2-C-methyl-D-erythritol 4-phosphate (MEP).</text>
</comment>
<comment type="catalytic activity">
    <reaction evidence="1">
        <text>2-C-methyl-D-erythritol 4-phosphate + NADP(+) = 1-deoxy-D-xylulose 5-phosphate + NADPH + H(+)</text>
        <dbReference type="Rhea" id="RHEA:13717"/>
        <dbReference type="ChEBI" id="CHEBI:15378"/>
        <dbReference type="ChEBI" id="CHEBI:57783"/>
        <dbReference type="ChEBI" id="CHEBI:57792"/>
        <dbReference type="ChEBI" id="CHEBI:58262"/>
        <dbReference type="ChEBI" id="CHEBI:58349"/>
        <dbReference type="EC" id="1.1.1.267"/>
    </reaction>
    <physiologicalReaction direction="right-to-left" evidence="1">
        <dbReference type="Rhea" id="RHEA:13719"/>
    </physiologicalReaction>
</comment>
<comment type="cofactor">
    <cofactor evidence="1">
        <name>Mg(2+)</name>
        <dbReference type="ChEBI" id="CHEBI:18420"/>
    </cofactor>
    <cofactor evidence="1">
        <name>Mn(2+)</name>
        <dbReference type="ChEBI" id="CHEBI:29035"/>
    </cofactor>
</comment>
<comment type="pathway">
    <text evidence="1">Isoprenoid biosynthesis; isopentenyl diphosphate biosynthesis via DXP pathway; isopentenyl diphosphate from 1-deoxy-D-xylulose 5-phosphate: step 1/6.</text>
</comment>
<comment type="similarity">
    <text evidence="1">Belongs to the DXR family.</text>
</comment>
<dbReference type="EC" id="1.1.1.267" evidence="1"/>
<dbReference type="EMBL" id="CR931997">
    <property type="protein sequence ID" value="CAI37331.1"/>
    <property type="molecule type" value="Genomic_DNA"/>
</dbReference>
<dbReference type="SMR" id="Q4JV26"/>
<dbReference type="STRING" id="306537.jk1167"/>
<dbReference type="KEGG" id="cjk:jk1167"/>
<dbReference type="eggNOG" id="COG0743">
    <property type="taxonomic scope" value="Bacteria"/>
</dbReference>
<dbReference type="HOGENOM" id="CLU_035714_4_0_11"/>
<dbReference type="UniPathway" id="UPA00056">
    <property type="reaction ID" value="UER00092"/>
</dbReference>
<dbReference type="Proteomes" id="UP000000545">
    <property type="component" value="Chromosome"/>
</dbReference>
<dbReference type="GO" id="GO:0030604">
    <property type="term" value="F:1-deoxy-D-xylulose-5-phosphate reductoisomerase activity"/>
    <property type="evidence" value="ECO:0007669"/>
    <property type="project" value="UniProtKB-UniRule"/>
</dbReference>
<dbReference type="GO" id="GO:0030145">
    <property type="term" value="F:manganese ion binding"/>
    <property type="evidence" value="ECO:0007669"/>
    <property type="project" value="TreeGrafter"/>
</dbReference>
<dbReference type="GO" id="GO:0070402">
    <property type="term" value="F:NADPH binding"/>
    <property type="evidence" value="ECO:0007669"/>
    <property type="project" value="InterPro"/>
</dbReference>
<dbReference type="GO" id="GO:0051484">
    <property type="term" value="P:isopentenyl diphosphate biosynthetic process, methylerythritol 4-phosphate pathway involved in terpenoid biosynthetic process"/>
    <property type="evidence" value="ECO:0007669"/>
    <property type="project" value="TreeGrafter"/>
</dbReference>
<dbReference type="Gene3D" id="1.10.1740.10">
    <property type="match status" value="1"/>
</dbReference>
<dbReference type="Gene3D" id="3.40.50.720">
    <property type="entry name" value="NAD(P)-binding Rossmann-like Domain"/>
    <property type="match status" value="1"/>
</dbReference>
<dbReference type="HAMAP" id="MF_00183">
    <property type="entry name" value="DXP_reductoisom"/>
    <property type="match status" value="1"/>
</dbReference>
<dbReference type="InterPro" id="IPR003821">
    <property type="entry name" value="DXP_reductoisomerase"/>
</dbReference>
<dbReference type="InterPro" id="IPR013644">
    <property type="entry name" value="DXP_reductoisomerase_C"/>
</dbReference>
<dbReference type="InterPro" id="IPR013512">
    <property type="entry name" value="DXP_reductoisomerase_N"/>
</dbReference>
<dbReference type="InterPro" id="IPR026877">
    <property type="entry name" value="DXPR_C"/>
</dbReference>
<dbReference type="InterPro" id="IPR036169">
    <property type="entry name" value="DXPR_C_sf"/>
</dbReference>
<dbReference type="InterPro" id="IPR036291">
    <property type="entry name" value="NAD(P)-bd_dom_sf"/>
</dbReference>
<dbReference type="NCBIfam" id="TIGR00243">
    <property type="entry name" value="Dxr"/>
    <property type="match status" value="1"/>
</dbReference>
<dbReference type="PANTHER" id="PTHR30525">
    <property type="entry name" value="1-DEOXY-D-XYLULOSE 5-PHOSPHATE REDUCTOISOMERASE"/>
    <property type="match status" value="1"/>
</dbReference>
<dbReference type="PANTHER" id="PTHR30525:SF0">
    <property type="entry name" value="1-DEOXY-D-XYLULOSE 5-PHOSPHATE REDUCTOISOMERASE, CHLOROPLASTIC"/>
    <property type="match status" value="1"/>
</dbReference>
<dbReference type="Pfam" id="PF08436">
    <property type="entry name" value="DXP_redisom_C"/>
    <property type="match status" value="1"/>
</dbReference>
<dbReference type="Pfam" id="PF02670">
    <property type="entry name" value="DXP_reductoisom"/>
    <property type="match status" value="1"/>
</dbReference>
<dbReference type="Pfam" id="PF13288">
    <property type="entry name" value="DXPR_C"/>
    <property type="match status" value="1"/>
</dbReference>
<dbReference type="PIRSF" id="PIRSF006205">
    <property type="entry name" value="Dxp_reductismrs"/>
    <property type="match status" value="1"/>
</dbReference>
<dbReference type="SUPFAM" id="SSF69055">
    <property type="entry name" value="1-deoxy-D-xylulose-5-phosphate reductoisomerase, C-terminal domain"/>
    <property type="match status" value="1"/>
</dbReference>
<dbReference type="SUPFAM" id="SSF55347">
    <property type="entry name" value="Glyceraldehyde-3-phosphate dehydrogenase-like, C-terminal domain"/>
    <property type="match status" value="1"/>
</dbReference>
<dbReference type="SUPFAM" id="SSF51735">
    <property type="entry name" value="NAD(P)-binding Rossmann-fold domains"/>
    <property type="match status" value="1"/>
</dbReference>
<gene>
    <name evidence="1" type="primary">dxr</name>
    <name type="synonym">ispC</name>
    <name type="ordered locus">jk1167</name>
</gene>
<organism>
    <name type="scientific">Corynebacterium jeikeium (strain K411)</name>
    <dbReference type="NCBI Taxonomy" id="306537"/>
    <lineage>
        <taxon>Bacteria</taxon>
        <taxon>Bacillati</taxon>
        <taxon>Actinomycetota</taxon>
        <taxon>Actinomycetes</taxon>
        <taxon>Mycobacteriales</taxon>
        <taxon>Corynebacteriaceae</taxon>
        <taxon>Corynebacterium</taxon>
    </lineage>
</organism>
<feature type="chain" id="PRO_0000163643" description="1-deoxy-D-xylulose 5-phosphate reductoisomerase">
    <location>
        <begin position="1"/>
        <end position="408"/>
    </location>
</feature>
<feature type="binding site" evidence="1">
    <location>
        <position position="26"/>
    </location>
    <ligand>
        <name>NADPH</name>
        <dbReference type="ChEBI" id="CHEBI:57783"/>
    </ligand>
</feature>
<feature type="binding site" evidence="1">
    <location>
        <position position="27"/>
    </location>
    <ligand>
        <name>NADPH</name>
        <dbReference type="ChEBI" id="CHEBI:57783"/>
    </ligand>
</feature>
<feature type="binding site" evidence="1">
    <location>
        <position position="28"/>
    </location>
    <ligand>
        <name>NADPH</name>
        <dbReference type="ChEBI" id="CHEBI:57783"/>
    </ligand>
</feature>
<feature type="binding site" evidence="1">
    <location>
        <position position="29"/>
    </location>
    <ligand>
        <name>NADPH</name>
        <dbReference type="ChEBI" id="CHEBI:57783"/>
    </ligand>
</feature>
<feature type="binding site" evidence="1">
    <location>
        <position position="143"/>
    </location>
    <ligand>
        <name>NADPH</name>
        <dbReference type="ChEBI" id="CHEBI:57783"/>
    </ligand>
</feature>
<feature type="binding site" evidence="1">
    <location>
        <position position="144"/>
    </location>
    <ligand>
        <name>1-deoxy-D-xylulose 5-phosphate</name>
        <dbReference type="ChEBI" id="CHEBI:57792"/>
    </ligand>
</feature>
<feature type="binding site" evidence="1">
    <location>
        <position position="145"/>
    </location>
    <ligand>
        <name>NADPH</name>
        <dbReference type="ChEBI" id="CHEBI:57783"/>
    </ligand>
</feature>
<feature type="binding site" evidence="1">
    <location>
        <position position="167"/>
    </location>
    <ligand>
        <name>Mn(2+)</name>
        <dbReference type="ChEBI" id="CHEBI:29035"/>
    </ligand>
</feature>
<feature type="binding site" evidence="1">
    <location>
        <position position="168"/>
    </location>
    <ligand>
        <name>1-deoxy-D-xylulose 5-phosphate</name>
        <dbReference type="ChEBI" id="CHEBI:57792"/>
    </ligand>
</feature>
<feature type="binding site" evidence="1">
    <location>
        <position position="169"/>
    </location>
    <ligand>
        <name>1-deoxy-D-xylulose 5-phosphate</name>
        <dbReference type="ChEBI" id="CHEBI:57792"/>
    </ligand>
</feature>
<feature type="binding site" evidence="1">
    <location>
        <position position="169"/>
    </location>
    <ligand>
        <name>Mn(2+)</name>
        <dbReference type="ChEBI" id="CHEBI:29035"/>
    </ligand>
</feature>
<feature type="binding site" evidence="1">
    <location>
        <position position="193"/>
    </location>
    <ligand>
        <name>1-deoxy-D-xylulose 5-phosphate</name>
        <dbReference type="ChEBI" id="CHEBI:57792"/>
    </ligand>
</feature>
<feature type="binding site" evidence="1">
    <location>
        <position position="216"/>
    </location>
    <ligand>
        <name>1-deoxy-D-xylulose 5-phosphate</name>
        <dbReference type="ChEBI" id="CHEBI:57792"/>
    </ligand>
</feature>
<feature type="binding site" evidence="1">
    <location>
        <position position="222"/>
    </location>
    <ligand>
        <name>NADPH</name>
        <dbReference type="ChEBI" id="CHEBI:57783"/>
    </ligand>
</feature>
<feature type="binding site" evidence="1">
    <location>
        <position position="229"/>
    </location>
    <ligand>
        <name>1-deoxy-D-xylulose 5-phosphate</name>
        <dbReference type="ChEBI" id="CHEBI:57792"/>
    </ligand>
</feature>
<feature type="binding site" evidence="1">
    <location>
        <position position="234"/>
    </location>
    <ligand>
        <name>1-deoxy-D-xylulose 5-phosphate</name>
        <dbReference type="ChEBI" id="CHEBI:57792"/>
    </ligand>
</feature>
<feature type="binding site" evidence="1">
    <location>
        <position position="235"/>
    </location>
    <ligand>
        <name>1-deoxy-D-xylulose 5-phosphate</name>
        <dbReference type="ChEBI" id="CHEBI:57792"/>
    </ligand>
</feature>
<feature type="binding site" evidence="1">
    <location>
        <position position="238"/>
    </location>
    <ligand>
        <name>1-deoxy-D-xylulose 5-phosphate</name>
        <dbReference type="ChEBI" id="CHEBI:57792"/>
    </ligand>
</feature>
<feature type="binding site" evidence="1">
    <location>
        <position position="238"/>
    </location>
    <ligand>
        <name>Mn(2+)</name>
        <dbReference type="ChEBI" id="CHEBI:29035"/>
    </ligand>
</feature>
<reference key="1">
    <citation type="journal article" date="2005" name="J. Bacteriol.">
        <title>Complete genome sequence and analysis of the multiresistant nosocomial pathogen Corynebacterium jeikeium K411, a lipid-requiring bacterium of the human skin flora.</title>
        <authorList>
            <person name="Tauch A."/>
            <person name="Kaiser O."/>
            <person name="Hain T."/>
            <person name="Goesmann A."/>
            <person name="Weisshaar B."/>
            <person name="Albersmeier A."/>
            <person name="Bekel T."/>
            <person name="Bischoff N."/>
            <person name="Brune I."/>
            <person name="Chakraborty T."/>
            <person name="Kalinowski J."/>
            <person name="Meyer F."/>
            <person name="Rupp O."/>
            <person name="Schneiker S."/>
            <person name="Viehoever P."/>
            <person name="Puehler A."/>
        </authorList>
    </citation>
    <scope>NUCLEOTIDE SEQUENCE [LARGE SCALE GENOMIC DNA]</scope>
    <source>
        <strain>K411</strain>
    </source>
</reference>
<proteinExistence type="inferred from homology"/>